<organism>
    <name type="scientific">Mus musculus</name>
    <name type="common">Mouse</name>
    <dbReference type="NCBI Taxonomy" id="10090"/>
    <lineage>
        <taxon>Eukaryota</taxon>
        <taxon>Metazoa</taxon>
        <taxon>Chordata</taxon>
        <taxon>Craniata</taxon>
        <taxon>Vertebrata</taxon>
        <taxon>Euteleostomi</taxon>
        <taxon>Mammalia</taxon>
        <taxon>Eutheria</taxon>
        <taxon>Euarchontoglires</taxon>
        <taxon>Glires</taxon>
        <taxon>Rodentia</taxon>
        <taxon>Myomorpha</taxon>
        <taxon>Muroidea</taxon>
        <taxon>Muridae</taxon>
        <taxon>Murinae</taxon>
        <taxon>Mus</taxon>
        <taxon>Mus</taxon>
    </lineage>
</organism>
<protein>
    <recommendedName>
        <fullName>Glycogen phosphorylase, brain form</fullName>
        <ecNumber>2.4.1.1</ecNumber>
    </recommendedName>
</protein>
<keyword id="KW-0007">Acetylation</keyword>
<keyword id="KW-0021">Allosteric enzyme</keyword>
<keyword id="KW-0119">Carbohydrate metabolism</keyword>
<keyword id="KW-0321">Glycogen metabolism</keyword>
<keyword id="KW-0328">Glycosyltransferase</keyword>
<keyword id="KW-0597">Phosphoprotein</keyword>
<keyword id="KW-0663">Pyridoxal phosphate</keyword>
<keyword id="KW-1185">Reference proteome</keyword>
<keyword id="KW-0808">Transferase</keyword>
<comment type="function">
    <text evidence="2">Glycogen phosphorylase that regulates glycogen mobilization. Phosphorylase is an important allosteric enzyme in carbohydrate metabolism. Enzymes from different sources differ in their regulatory mechanisms and in their natural substrates. However, all known phosphorylases share catalytic and structural properties.</text>
</comment>
<comment type="catalytic activity">
    <reaction>
        <text>[(1-&gt;4)-alpha-D-glucosyl](n) + phosphate = [(1-&gt;4)-alpha-D-glucosyl](n-1) + alpha-D-glucose 1-phosphate</text>
        <dbReference type="Rhea" id="RHEA:41732"/>
        <dbReference type="Rhea" id="RHEA-COMP:9584"/>
        <dbReference type="Rhea" id="RHEA-COMP:9586"/>
        <dbReference type="ChEBI" id="CHEBI:15444"/>
        <dbReference type="ChEBI" id="CHEBI:43474"/>
        <dbReference type="ChEBI" id="CHEBI:58601"/>
        <dbReference type="EC" id="2.4.1.1"/>
    </reaction>
</comment>
<comment type="cofactor">
    <cofactor evidence="1">
        <name>pyridoxal 5'-phosphate</name>
        <dbReference type="ChEBI" id="CHEBI:597326"/>
    </cofactor>
</comment>
<comment type="activity regulation">
    <text evidence="2">Activity of phosphorylase is controlled both by allosteric means (through the non-covalent binding of metabolites) and by covalent modification. Thus AMP allosterically activates, whereas ATP, ADP, and glucose-6-phosphate allosterically inhibit, phosphorylase B (By similarity).</text>
</comment>
<comment type="subunit">
    <text evidence="2">Homodimer. Dimers associate into a tetramer to form the enzymatically active phosphorylase A (By similarity).</text>
</comment>
<comment type="PTM">
    <text evidence="3">Phosphorylation of Ser-15 converts phosphorylase B (unphosphorylated) to phosphorylase A.</text>
</comment>
<comment type="similarity">
    <text evidence="5">Belongs to the glycogen phosphorylase family.</text>
</comment>
<comment type="sequence caution" evidence="5">
    <conflict type="erroneous initiation">
        <sequence resource="EMBL-CDS" id="AAH32209"/>
    </conflict>
</comment>
<accession>Q8CI94</accession>
<accession>Q8K283</accession>
<dbReference type="EC" id="2.4.1.1"/>
<dbReference type="EMBL" id="BC032209">
    <property type="protein sequence ID" value="AAH32209.1"/>
    <property type="status" value="ALT_INIT"/>
    <property type="molecule type" value="mRNA"/>
</dbReference>
<dbReference type="EMBL" id="BC035283">
    <property type="protein sequence ID" value="AAH35283.1"/>
    <property type="molecule type" value="mRNA"/>
</dbReference>
<dbReference type="CCDS" id="CCDS16862.1"/>
<dbReference type="RefSeq" id="NP_722476.1">
    <property type="nucleotide sequence ID" value="NM_153781.1"/>
</dbReference>
<dbReference type="SMR" id="Q8CI94"/>
<dbReference type="BioGRID" id="225278">
    <property type="interactions" value="23"/>
</dbReference>
<dbReference type="FunCoup" id="Q8CI94">
    <property type="interactions" value="1256"/>
</dbReference>
<dbReference type="IntAct" id="Q8CI94">
    <property type="interactions" value="7"/>
</dbReference>
<dbReference type="STRING" id="10090.ENSMUSP00000035743"/>
<dbReference type="CAZy" id="GT35">
    <property type="family name" value="Glycosyltransferase Family 35"/>
</dbReference>
<dbReference type="GlyGen" id="Q8CI94">
    <property type="glycosylation" value="3 sites, 2 N-linked glycans (2 sites), 1 O-linked glycan (1 site)"/>
</dbReference>
<dbReference type="iPTMnet" id="Q8CI94"/>
<dbReference type="MetOSite" id="Q8CI94"/>
<dbReference type="PhosphoSitePlus" id="Q8CI94"/>
<dbReference type="SwissPalm" id="Q8CI94"/>
<dbReference type="jPOST" id="Q8CI94"/>
<dbReference type="PaxDb" id="10090-ENSMUSP00000035743"/>
<dbReference type="ProteomicsDB" id="301853"/>
<dbReference type="Pumba" id="Q8CI94"/>
<dbReference type="Antibodypedia" id="10014">
    <property type="antibodies" value="617 antibodies from 34 providers"/>
</dbReference>
<dbReference type="Ensembl" id="ENSMUST00000045441.8">
    <property type="protein sequence ID" value="ENSMUSP00000035743.8"/>
    <property type="gene ID" value="ENSMUSG00000033059.8"/>
</dbReference>
<dbReference type="GeneID" id="110078"/>
<dbReference type="KEGG" id="mmu:110078"/>
<dbReference type="UCSC" id="uc008mul.1">
    <property type="organism name" value="mouse"/>
</dbReference>
<dbReference type="AGR" id="MGI:97828"/>
<dbReference type="CTD" id="5834"/>
<dbReference type="MGI" id="MGI:97828">
    <property type="gene designation" value="Pygb"/>
</dbReference>
<dbReference type="VEuPathDB" id="HostDB:ENSMUSG00000033059"/>
<dbReference type="eggNOG" id="KOG2099">
    <property type="taxonomic scope" value="Eukaryota"/>
</dbReference>
<dbReference type="GeneTree" id="ENSGT00950000183148"/>
<dbReference type="HOGENOM" id="CLU_010198_1_1_1"/>
<dbReference type="InParanoid" id="Q8CI94"/>
<dbReference type="OMA" id="WLKQANP"/>
<dbReference type="OrthoDB" id="9215500at2759"/>
<dbReference type="PhylomeDB" id="Q8CI94"/>
<dbReference type="TreeFam" id="TF300309"/>
<dbReference type="Reactome" id="R-MMU-6798695">
    <property type="pathway name" value="Neutrophil degranulation"/>
</dbReference>
<dbReference type="BioGRID-ORCS" id="110078">
    <property type="hits" value="1 hit in 79 CRISPR screens"/>
</dbReference>
<dbReference type="ChiTaRS" id="Pygb">
    <property type="organism name" value="mouse"/>
</dbReference>
<dbReference type="PRO" id="PR:Q8CI94"/>
<dbReference type="Proteomes" id="UP000000589">
    <property type="component" value="Chromosome 2"/>
</dbReference>
<dbReference type="RNAct" id="Q8CI94">
    <property type="molecule type" value="protein"/>
</dbReference>
<dbReference type="Bgee" id="ENSMUSG00000033059">
    <property type="expression patterns" value="Expressed in urinary bladder urothelium and 254 other cell types or tissues"/>
</dbReference>
<dbReference type="GO" id="GO:0030424">
    <property type="term" value="C:axon"/>
    <property type="evidence" value="ECO:0000266"/>
    <property type="project" value="MGI"/>
</dbReference>
<dbReference type="GO" id="GO:0005737">
    <property type="term" value="C:cytoplasm"/>
    <property type="evidence" value="ECO:0007669"/>
    <property type="project" value="Ensembl"/>
</dbReference>
<dbReference type="GO" id="GO:0008184">
    <property type="term" value="F:glycogen phosphorylase activity"/>
    <property type="evidence" value="ECO:0000314"/>
    <property type="project" value="MGI"/>
</dbReference>
<dbReference type="GO" id="GO:0030170">
    <property type="term" value="F:pyridoxal phosphate binding"/>
    <property type="evidence" value="ECO:0007669"/>
    <property type="project" value="InterPro"/>
</dbReference>
<dbReference type="GO" id="GO:0005980">
    <property type="term" value="P:glycogen catabolic process"/>
    <property type="evidence" value="ECO:0000314"/>
    <property type="project" value="MGI"/>
</dbReference>
<dbReference type="CDD" id="cd04300">
    <property type="entry name" value="GT35_Glycogen_Phosphorylase"/>
    <property type="match status" value="1"/>
</dbReference>
<dbReference type="FunFam" id="3.40.50.2000:FF:000005">
    <property type="entry name" value="Alpha-1,4 glucan phosphorylase"/>
    <property type="match status" value="1"/>
</dbReference>
<dbReference type="FunFam" id="3.40.50.2000:FF:000153">
    <property type="entry name" value="Alpha-1,4 glucan phosphorylase"/>
    <property type="match status" value="1"/>
</dbReference>
<dbReference type="FunFam" id="3.40.50.2000:FF:000197">
    <property type="entry name" value="Alpha-1,4 glucan phosphorylase"/>
    <property type="match status" value="1"/>
</dbReference>
<dbReference type="Gene3D" id="3.40.50.2000">
    <property type="entry name" value="Glycogen Phosphorylase B"/>
    <property type="match status" value="2"/>
</dbReference>
<dbReference type="InterPro" id="IPR011833">
    <property type="entry name" value="Glycg_phsphrylas"/>
</dbReference>
<dbReference type="InterPro" id="IPR000811">
    <property type="entry name" value="Glyco_trans_35"/>
</dbReference>
<dbReference type="InterPro" id="IPR035090">
    <property type="entry name" value="Pyridoxal_P_attach_site"/>
</dbReference>
<dbReference type="NCBIfam" id="TIGR02093">
    <property type="entry name" value="P_ylase"/>
    <property type="match status" value="1"/>
</dbReference>
<dbReference type="PANTHER" id="PTHR11468">
    <property type="entry name" value="GLYCOGEN PHOSPHORYLASE"/>
    <property type="match status" value="1"/>
</dbReference>
<dbReference type="PANTHER" id="PTHR11468:SF29">
    <property type="entry name" value="GLYCOGEN PHOSPHORYLASE, BRAIN FORM"/>
    <property type="match status" value="1"/>
</dbReference>
<dbReference type="Pfam" id="PF00343">
    <property type="entry name" value="Phosphorylase"/>
    <property type="match status" value="1"/>
</dbReference>
<dbReference type="PIRSF" id="PIRSF000460">
    <property type="entry name" value="Pprylas_GlgP"/>
    <property type="match status" value="1"/>
</dbReference>
<dbReference type="SUPFAM" id="SSF53756">
    <property type="entry name" value="UDP-Glycosyltransferase/glycogen phosphorylase"/>
    <property type="match status" value="1"/>
</dbReference>
<dbReference type="PROSITE" id="PS00102">
    <property type="entry name" value="PHOSPHORYLASE"/>
    <property type="match status" value="1"/>
</dbReference>
<feature type="initiator methionine" description="Removed" evidence="2">
    <location>
        <position position="1"/>
    </location>
</feature>
<feature type="chain" id="PRO_0000188536" description="Glycogen phosphorylase, brain form">
    <location>
        <begin position="2"/>
        <end position="843"/>
    </location>
</feature>
<feature type="region of interest" description="Pyridoxal 5'-phosphate" evidence="2">
    <location>
        <begin position="677"/>
        <end position="678"/>
    </location>
</feature>
<feature type="binding site" evidence="2">
    <location>
        <position position="43"/>
    </location>
    <ligand>
        <name>AMP</name>
        <dbReference type="ChEBI" id="CHEBI:456215"/>
        <note>ligand shared between dimeric partners</note>
    </ligand>
</feature>
<feature type="binding site" description="in other chain" evidence="2">
    <location>
        <position position="197"/>
    </location>
    <ligand>
        <name>AMP</name>
        <dbReference type="ChEBI" id="CHEBI:456215"/>
        <note>ligand shared between dimeric partners</note>
    </ligand>
</feature>
<feature type="binding site" description="in other chain" evidence="2">
    <location>
        <position position="310"/>
    </location>
    <ligand>
        <name>AMP</name>
        <dbReference type="ChEBI" id="CHEBI:456215"/>
        <note>ligand shared between dimeric partners</note>
    </ligand>
</feature>
<feature type="binding site" evidence="2">
    <location>
        <position position="569"/>
    </location>
    <ligand>
        <name>pyridoxal 5'-phosphate</name>
        <dbReference type="ChEBI" id="CHEBI:597326"/>
    </ligand>
</feature>
<feature type="site" description="Participates in a stacking interaction with the adenine ring of AMP" evidence="2">
    <location>
        <position position="76"/>
    </location>
</feature>
<feature type="site" description="Involved in the association of subunits" evidence="1">
    <location>
        <position position="109"/>
    </location>
</feature>
<feature type="site" description="Involved in the association of subunits" evidence="1">
    <location>
        <position position="143"/>
    </location>
</feature>
<feature type="site" description="May be involved in allosteric control" evidence="1">
    <location>
        <position position="156"/>
    </location>
</feature>
<feature type="modified residue" description="N-acetylalanine" evidence="2">
    <location>
        <position position="2"/>
    </location>
</feature>
<feature type="modified residue" description="Phosphoserine; by PHK; in form phosphorylase A" evidence="4">
    <location>
        <position position="15"/>
    </location>
</feature>
<feature type="modified residue" description="Phosphotyrosine" evidence="6">
    <location>
        <position position="197"/>
    </location>
</feature>
<feature type="modified residue" description="Phosphotyrosine" evidence="6">
    <location>
        <position position="473"/>
    </location>
</feature>
<feature type="modified residue" description="Phosphoserine" evidence="7">
    <location>
        <position position="524"/>
    </location>
</feature>
<feature type="modified residue" description="N6-(pyridoxal phosphate)lysine" evidence="2">
    <location>
        <position position="681"/>
    </location>
</feature>
<reference key="1">
    <citation type="journal article" date="2004" name="Genome Res.">
        <title>The status, quality, and expansion of the NIH full-length cDNA project: the Mammalian Gene Collection (MGC).</title>
        <authorList>
            <consortium name="The MGC Project Team"/>
        </authorList>
    </citation>
    <scope>NUCLEOTIDE SEQUENCE [LARGE SCALE MRNA]</scope>
    <source>
        <strain>FVB/N</strain>
    </source>
</reference>
<reference key="2">
    <citation type="journal article" date="2008" name="J. Proteome Res.">
        <title>Large-scale identification and evolution indexing of tyrosine phosphorylation sites from murine brain.</title>
        <authorList>
            <person name="Ballif B.A."/>
            <person name="Carey G.R."/>
            <person name="Sunyaev S.R."/>
            <person name="Gygi S.P."/>
        </authorList>
    </citation>
    <scope>PHOSPHORYLATION [LARGE SCALE ANALYSIS] AT TYR-197 AND TYR-473</scope>
    <scope>IDENTIFICATION BY MASS SPECTROMETRY [LARGE SCALE ANALYSIS]</scope>
    <source>
        <tissue>Brain</tissue>
    </source>
</reference>
<reference key="3">
    <citation type="journal article" date="2010" name="Cell">
        <title>A tissue-specific atlas of mouse protein phosphorylation and expression.</title>
        <authorList>
            <person name="Huttlin E.L."/>
            <person name="Jedrychowski M.P."/>
            <person name="Elias J.E."/>
            <person name="Goswami T."/>
            <person name="Rad R."/>
            <person name="Beausoleil S.A."/>
            <person name="Villen J."/>
            <person name="Haas W."/>
            <person name="Sowa M.E."/>
            <person name="Gygi S.P."/>
        </authorList>
    </citation>
    <scope>PHOSPHORYLATION [LARGE SCALE ANALYSIS] AT SER-524</scope>
    <scope>IDENTIFICATION BY MASS SPECTROMETRY [LARGE SCALE ANALYSIS]</scope>
    <source>
        <tissue>Brain</tissue>
        <tissue>Brown adipose tissue</tissue>
        <tissue>Heart</tissue>
        <tissue>Kidney</tissue>
        <tissue>Liver</tissue>
        <tissue>Lung</tissue>
        <tissue>Pancreas</tissue>
        <tissue>Spleen</tissue>
        <tissue>Testis</tissue>
    </source>
</reference>
<name>PYGB_MOUSE</name>
<proteinExistence type="evidence at protein level"/>
<sequence length="843" mass="96730">MAKPLTDSERQKQISVRGIAGLGDVAEVRKSFNRHLHFTLVKDRNVATPRDYFFALAHTVRDHLVGRWIRTQQHYYERDPKRIYYLSLEFYMGRTLQNTMVNLGLQTACDEATYQLGLDLEELEEIEEDAGLGNGGLGRLAACFLDSMATLGLAAYGYGIRYEFGIFNQKIVNGWQVEEADDWLRYGNPWEKARPEYMLPVHFYGRVEHTPDGVLWLDTQVVLAMPYDTPVPGYKNNTVNTMRLWSAKAPNDFKLKDFNVGDYIEAVLDRNLAENISRVLYPNDNFFEGKELRLKQEYFVVAATLQDIIRRFKSSRFGCRDPVRTCFETFPDKVAIQLNDTHPALSIPELMRILVDVEKVDWDKAWEITKKTCAYTNHTVLPEALERWPVSMFEKLLPRHLEIIYAINQRHLDHVAALFPGDVDRLRRMSVIEEGDCKRINMAHLCVIGSHAVNGVARIHSEIVKQSVFKDFYELEPEKFQNKTNGITPRRWLLLCNPGLAEIIVERIGEGFLTDLSQLKKLLSLVDDEAFIRDVAKVKQENKLKFSAQLEKEYKVKINPASMFDVHVKRIHEYKRQLLNCLHIITLYNRIKKDPAKAFVPRTVMIGGKAAPGYHMAKMIIKLVTSIGDVVNHDPVVGDRLRVIFLENYRVSLAEKVIPAADLSQQISTAGTEASGTGNMKFMLNGALTIGTMDGANVEMAEEAGEENLFIFGMRVEDVEALDQKGYNAREFYERLPELRQAVDQISSGFFSPKDPDCFKDVVNMLMYHDRFKVFADYEAYIQCQAQVDRLYRNSKEWTKKVIRNIACSGKFSSDRTITEYAREIWGVEPSDLQIPPPNLPKD</sequence>
<evidence type="ECO:0000250" key="1"/>
<evidence type="ECO:0000250" key="2">
    <source>
        <dbReference type="UniProtKB" id="P11216"/>
    </source>
</evidence>
<evidence type="ECO:0000250" key="3">
    <source>
        <dbReference type="UniProtKB" id="P11217"/>
    </source>
</evidence>
<evidence type="ECO:0000250" key="4">
    <source>
        <dbReference type="UniProtKB" id="P53534"/>
    </source>
</evidence>
<evidence type="ECO:0000305" key="5"/>
<evidence type="ECO:0007744" key="6">
    <source>
    </source>
</evidence>
<evidence type="ECO:0007744" key="7">
    <source>
    </source>
</evidence>
<gene>
    <name type="primary">Pygb</name>
</gene>